<name>RHAD_ECOBW</name>
<gene>
    <name evidence="1" type="primary">rhaD</name>
    <name type="ordered locus">BWG_3572</name>
</gene>
<proteinExistence type="inferred from homology"/>
<organism>
    <name type="scientific">Escherichia coli (strain K12 / MC4100 / BW2952)</name>
    <dbReference type="NCBI Taxonomy" id="595496"/>
    <lineage>
        <taxon>Bacteria</taxon>
        <taxon>Pseudomonadati</taxon>
        <taxon>Pseudomonadota</taxon>
        <taxon>Gammaproteobacteria</taxon>
        <taxon>Enterobacterales</taxon>
        <taxon>Enterobacteriaceae</taxon>
        <taxon>Escherichia</taxon>
    </lineage>
</organism>
<sequence length="274" mass="30145">MQNITQSWFVQGMIKATTDAWLKGWDERNGGNLTLRLDDADIAPYHDNFHQQPRYIPLSQPMPLLANTPFIVTGSGKFFRNVQLDPAANLGIVKVDSDGAGYHILWGLTNEAVPTSELPAHFLSHCERIKATNGKDRVIMHCHATNLIALTYVLENDTAVFTRQLWEGSTECLVVFPDGVGILPWMVPGTDEIGQATAQEMQKHSLVLWPFHGVFGSGPTLDETFGLIDTAEKSAQVLVKVYSMGGMKQTISREELIALGKRFGVTPLASALAL</sequence>
<feature type="chain" id="PRO_1000212898" description="Rhamnulose-1-phosphate aldolase">
    <location>
        <begin position="1"/>
        <end position="274"/>
    </location>
</feature>
<feature type="active site" evidence="1">
    <location>
        <position position="117"/>
    </location>
</feature>
<feature type="binding site" evidence="1">
    <location>
        <position position="141"/>
    </location>
    <ligand>
        <name>Zn(2+)</name>
        <dbReference type="ChEBI" id="CHEBI:29105"/>
    </ligand>
</feature>
<feature type="binding site" evidence="1">
    <location>
        <position position="143"/>
    </location>
    <ligand>
        <name>Zn(2+)</name>
        <dbReference type="ChEBI" id="CHEBI:29105"/>
    </ligand>
</feature>
<feature type="binding site" evidence="1">
    <location>
        <position position="212"/>
    </location>
    <ligand>
        <name>Zn(2+)</name>
        <dbReference type="ChEBI" id="CHEBI:29105"/>
    </ligand>
</feature>
<evidence type="ECO:0000255" key="1">
    <source>
        <dbReference type="HAMAP-Rule" id="MF_00770"/>
    </source>
</evidence>
<comment type="function">
    <text evidence="1">Catalyzes the reversible cleavage of L-rhamnulose-1-phosphate to dihydroxyacetone phosphate (DHAP) and L-lactaldehyde.</text>
</comment>
<comment type="catalytic activity">
    <reaction evidence="1">
        <text>L-rhamnulose 1-phosphate = (S)-lactaldehyde + dihydroxyacetone phosphate</text>
        <dbReference type="Rhea" id="RHEA:19689"/>
        <dbReference type="ChEBI" id="CHEBI:18041"/>
        <dbReference type="ChEBI" id="CHEBI:57642"/>
        <dbReference type="ChEBI" id="CHEBI:58313"/>
        <dbReference type="EC" id="4.1.2.19"/>
    </reaction>
</comment>
<comment type="cofactor">
    <cofactor evidence="1">
        <name>Zn(2+)</name>
        <dbReference type="ChEBI" id="CHEBI:29105"/>
    </cofactor>
    <text evidence="1">Binds 1 zinc ion per subunit.</text>
</comment>
<comment type="pathway">
    <text evidence="1">Carbohydrate degradation; L-rhamnose degradation; glycerone phosphate from L-rhamnose: step 3/3.</text>
</comment>
<comment type="subunit">
    <text evidence="1">Homotetramer.</text>
</comment>
<comment type="subcellular location">
    <subcellularLocation>
        <location evidence="1">Cytoplasm</location>
    </subcellularLocation>
</comment>
<comment type="similarity">
    <text evidence="1">Belongs to the aldolase class II family. RhaD subfamily.</text>
</comment>
<accession>C5A070</accession>
<keyword id="KW-0963">Cytoplasm</keyword>
<keyword id="KW-0456">Lyase</keyword>
<keyword id="KW-0479">Metal-binding</keyword>
<keyword id="KW-0684">Rhamnose metabolism</keyword>
<keyword id="KW-0862">Zinc</keyword>
<dbReference type="EC" id="4.1.2.19" evidence="1"/>
<dbReference type="EMBL" id="CP001396">
    <property type="protein sequence ID" value="ACR65455.1"/>
    <property type="molecule type" value="Genomic_DNA"/>
</dbReference>
<dbReference type="RefSeq" id="WP_001179745.1">
    <property type="nucleotide sequence ID" value="NC_012759.1"/>
</dbReference>
<dbReference type="SMR" id="C5A070"/>
<dbReference type="KEGG" id="ebw:BWG_3572"/>
<dbReference type="HOGENOM" id="CLU_076831_0_0_6"/>
<dbReference type="UniPathway" id="UPA00541">
    <property type="reaction ID" value="UER00603"/>
</dbReference>
<dbReference type="GO" id="GO:0005829">
    <property type="term" value="C:cytosol"/>
    <property type="evidence" value="ECO:0007669"/>
    <property type="project" value="TreeGrafter"/>
</dbReference>
<dbReference type="GO" id="GO:0046872">
    <property type="term" value="F:metal ion binding"/>
    <property type="evidence" value="ECO:0007669"/>
    <property type="project" value="UniProtKB-KW"/>
</dbReference>
<dbReference type="GO" id="GO:0008994">
    <property type="term" value="F:rhamnulose-1-phosphate aldolase activity"/>
    <property type="evidence" value="ECO:0007669"/>
    <property type="project" value="UniProtKB-UniRule"/>
</dbReference>
<dbReference type="GO" id="GO:0019323">
    <property type="term" value="P:pentose catabolic process"/>
    <property type="evidence" value="ECO:0007669"/>
    <property type="project" value="TreeGrafter"/>
</dbReference>
<dbReference type="GO" id="GO:0019301">
    <property type="term" value="P:rhamnose catabolic process"/>
    <property type="evidence" value="ECO:0007669"/>
    <property type="project" value="UniProtKB-UniRule"/>
</dbReference>
<dbReference type="CDD" id="cd00398">
    <property type="entry name" value="Aldolase_II"/>
    <property type="match status" value="1"/>
</dbReference>
<dbReference type="FunFam" id="3.40.225.10:FF:000006">
    <property type="entry name" value="Rhamnulose-1-phosphate aldolase"/>
    <property type="match status" value="1"/>
</dbReference>
<dbReference type="Gene3D" id="3.40.225.10">
    <property type="entry name" value="Class II aldolase/adducin N-terminal domain"/>
    <property type="match status" value="1"/>
</dbReference>
<dbReference type="HAMAP" id="MF_00770">
    <property type="entry name" value="RhaD"/>
    <property type="match status" value="1"/>
</dbReference>
<dbReference type="InterPro" id="IPR050197">
    <property type="entry name" value="Aldolase_class_II_sugar_metab"/>
</dbReference>
<dbReference type="InterPro" id="IPR001303">
    <property type="entry name" value="Aldolase_II/adducin_N"/>
</dbReference>
<dbReference type="InterPro" id="IPR036409">
    <property type="entry name" value="Aldolase_II/adducin_N_sf"/>
</dbReference>
<dbReference type="InterPro" id="IPR013447">
    <property type="entry name" value="Rhamnulose-1-P_Aldolase"/>
</dbReference>
<dbReference type="NCBIfam" id="NF002963">
    <property type="entry name" value="PRK03634.1"/>
    <property type="match status" value="1"/>
</dbReference>
<dbReference type="NCBIfam" id="TIGR02624">
    <property type="entry name" value="rhamnu_1P_ald"/>
    <property type="match status" value="1"/>
</dbReference>
<dbReference type="PANTHER" id="PTHR22789">
    <property type="entry name" value="FUCULOSE PHOSPHATE ALDOLASE"/>
    <property type="match status" value="1"/>
</dbReference>
<dbReference type="PANTHER" id="PTHR22789:SF16">
    <property type="entry name" value="RHAMNULOSE-1-PHOSPHATE ALDOLASE"/>
    <property type="match status" value="1"/>
</dbReference>
<dbReference type="Pfam" id="PF00596">
    <property type="entry name" value="Aldolase_II"/>
    <property type="match status" value="1"/>
</dbReference>
<dbReference type="SMART" id="SM01007">
    <property type="entry name" value="Aldolase_II"/>
    <property type="match status" value="1"/>
</dbReference>
<dbReference type="SUPFAM" id="SSF53639">
    <property type="entry name" value="AraD/HMP-PK domain-like"/>
    <property type="match status" value="1"/>
</dbReference>
<protein>
    <recommendedName>
        <fullName evidence="1">Rhamnulose-1-phosphate aldolase</fullName>
        <ecNumber evidence="1">4.1.2.19</ecNumber>
    </recommendedName>
</protein>
<reference key="1">
    <citation type="journal article" date="2009" name="J. Bacteriol.">
        <title>Genomic sequencing reveals regulatory mutations and recombinational events in the widely used MC4100 lineage of Escherichia coli K-12.</title>
        <authorList>
            <person name="Ferenci T."/>
            <person name="Zhou Z."/>
            <person name="Betteridge T."/>
            <person name="Ren Y."/>
            <person name="Liu Y."/>
            <person name="Feng L."/>
            <person name="Reeves P.R."/>
            <person name="Wang L."/>
        </authorList>
    </citation>
    <scope>NUCLEOTIDE SEQUENCE [LARGE SCALE GENOMIC DNA]</scope>
    <source>
        <strain>K12 / MC4100 / BW2952</strain>
    </source>
</reference>